<comment type="function">
    <text evidence="1">Catalyzes the hydrolytic deamination of adenine to hypoxanthine. Plays an important role in the purine salvage pathway and in nitrogen catabolism.</text>
</comment>
<comment type="catalytic activity">
    <reaction evidence="1">
        <text>adenine + H2O + H(+) = hypoxanthine + NH4(+)</text>
        <dbReference type="Rhea" id="RHEA:23688"/>
        <dbReference type="ChEBI" id="CHEBI:15377"/>
        <dbReference type="ChEBI" id="CHEBI:15378"/>
        <dbReference type="ChEBI" id="CHEBI:16708"/>
        <dbReference type="ChEBI" id="CHEBI:17368"/>
        <dbReference type="ChEBI" id="CHEBI:28938"/>
        <dbReference type="EC" id="3.5.4.2"/>
    </reaction>
</comment>
<comment type="cofactor">
    <cofactor evidence="1">
        <name>Zn(2+)</name>
        <dbReference type="ChEBI" id="CHEBI:29105"/>
    </cofactor>
    <text evidence="1">Binds 1 zinc ion per subunit.</text>
</comment>
<comment type="similarity">
    <text evidence="1">Belongs to the metallo-dependent hydrolases superfamily. Adenosine and AMP deaminases family. Adenine deaminase type 2 subfamily.</text>
</comment>
<dbReference type="EC" id="3.5.4.2" evidence="1"/>
<dbReference type="EMBL" id="CT573326">
    <property type="protein sequence ID" value="CAK13610.1"/>
    <property type="molecule type" value="Genomic_DNA"/>
</dbReference>
<dbReference type="RefSeq" id="WP_011532042.1">
    <property type="nucleotide sequence ID" value="NC_008027.1"/>
</dbReference>
<dbReference type="SMR" id="Q1IFE4"/>
<dbReference type="STRING" id="384676.PSEEN0674"/>
<dbReference type="GeneID" id="32803996"/>
<dbReference type="KEGG" id="pen:PSEEN0674"/>
<dbReference type="eggNOG" id="COG1816">
    <property type="taxonomic scope" value="Bacteria"/>
</dbReference>
<dbReference type="HOGENOM" id="CLU_039228_7_0_6"/>
<dbReference type="OrthoDB" id="105475at2"/>
<dbReference type="Proteomes" id="UP000000658">
    <property type="component" value="Chromosome"/>
</dbReference>
<dbReference type="GO" id="GO:0005829">
    <property type="term" value="C:cytosol"/>
    <property type="evidence" value="ECO:0007669"/>
    <property type="project" value="TreeGrafter"/>
</dbReference>
<dbReference type="GO" id="GO:0000034">
    <property type="term" value="F:adenine deaminase activity"/>
    <property type="evidence" value="ECO:0007669"/>
    <property type="project" value="UniProtKB-UniRule"/>
</dbReference>
<dbReference type="GO" id="GO:0008270">
    <property type="term" value="F:zinc ion binding"/>
    <property type="evidence" value="ECO:0007669"/>
    <property type="project" value="UniProtKB-UniRule"/>
</dbReference>
<dbReference type="GO" id="GO:0006146">
    <property type="term" value="P:adenine catabolic process"/>
    <property type="evidence" value="ECO:0007669"/>
    <property type="project" value="UniProtKB-UniRule"/>
</dbReference>
<dbReference type="GO" id="GO:0043103">
    <property type="term" value="P:hypoxanthine salvage"/>
    <property type="evidence" value="ECO:0007669"/>
    <property type="project" value="UniProtKB-UniRule"/>
</dbReference>
<dbReference type="GO" id="GO:0009117">
    <property type="term" value="P:nucleotide metabolic process"/>
    <property type="evidence" value="ECO:0007669"/>
    <property type="project" value="UniProtKB-KW"/>
</dbReference>
<dbReference type="CDD" id="cd01320">
    <property type="entry name" value="ADA"/>
    <property type="match status" value="1"/>
</dbReference>
<dbReference type="FunFam" id="3.20.20.140:FF:000039">
    <property type="entry name" value="Adenine deaminase"/>
    <property type="match status" value="1"/>
</dbReference>
<dbReference type="Gene3D" id="3.20.20.140">
    <property type="entry name" value="Metal-dependent hydrolases"/>
    <property type="match status" value="1"/>
</dbReference>
<dbReference type="HAMAP" id="MF_01962">
    <property type="entry name" value="Adenine_deaminase"/>
    <property type="match status" value="1"/>
</dbReference>
<dbReference type="InterPro" id="IPR001365">
    <property type="entry name" value="A_deaminase_dom"/>
</dbReference>
<dbReference type="InterPro" id="IPR028892">
    <property type="entry name" value="ADE"/>
</dbReference>
<dbReference type="InterPro" id="IPR006330">
    <property type="entry name" value="Ado/ade_deaminase"/>
</dbReference>
<dbReference type="InterPro" id="IPR032466">
    <property type="entry name" value="Metal_Hydrolase"/>
</dbReference>
<dbReference type="NCBIfam" id="TIGR01430">
    <property type="entry name" value="aden_deam"/>
    <property type="match status" value="1"/>
</dbReference>
<dbReference type="NCBIfam" id="NF006850">
    <property type="entry name" value="PRK09358.1-6"/>
    <property type="match status" value="1"/>
</dbReference>
<dbReference type="PANTHER" id="PTHR43114">
    <property type="entry name" value="ADENINE DEAMINASE"/>
    <property type="match status" value="1"/>
</dbReference>
<dbReference type="PANTHER" id="PTHR43114:SF6">
    <property type="entry name" value="ADENINE DEAMINASE"/>
    <property type="match status" value="1"/>
</dbReference>
<dbReference type="Pfam" id="PF00962">
    <property type="entry name" value="A_deaminase"/>
    <property type="match status" value="1"/>
</dbReference>
<dbReference type="SUPFAM" id="SSF51556">
    <property type="entry name" value="Metallo-dependent hydrolases"/>
    <property type="match status" value="1"/>
</dbReference>
<reference key="1">
    <citation type="journal article" date="2006" name="Nat. Biotechnol.">
        <title>Complete genome sequence of the entomopathogenic and metabolically versatile soil bacterium Pseudomonas entomophila.</title>
        <authorList>
            <person name="Vodovar N."/>
            <person name="Vallenet D."/>
            <person name="Cruveiller S."/>
            <person name="Rouy Z."/>
            <person name="Barbe V."/>
            <person name="Acosta C."/>
            <person name="Cattolico L."/>
            <person name="Jubin C."/>
            <person name="Lajus A."/>
            <person name="Segurens B."/>
            <person name="Vacherie B."/>
            <person name="Wincker P."/>
            <person name="Weissenbach J."/>
            <person name="Lemaitre B."/>
            <person name="Medigue C."/>
            <person name="Boccard F."/>
        </authorList>
    </citation>
    <scope>NUCLEOTIDE SEQUENCE [LARGE SCALE GENOMIC DNA]</scope>
    <source>
        <strain>L48</strain>
    </source>
</reference>
<accession>Q1IFE4</accession>
<organism>
    <name type="scientific">Pseudomonas entomophila (strain L48)</name>
    <dbReference type="NCBI Taxonomy" id="384676"/>
    <lineage>
        <taxon>Bacteria</taxon>
        <taxon>Pseudomonadati</taxon>
        <taxon>Pseudomonadota</taxon>
        <taxon>Gammaproteobacteria</taxon>
        <taxon>Pseudomonadales</taxon>
        <taxon>Pseudomonadaceae</taxon>
        <taxon>Pseudomonas</taxon>
    </lineage>
</organism>
<keyword id="KW-0378">Hydrolase</keyword>
<keyword id="KW-0479">Metal-binding</keyword>
<keyword id="KW-0546">Nucleotide metabolism</keyword>
<keyword id="KW-0862">Zinc</keyword>
<protein>
    <recommendedName>
        <fullName evidence="1">Adenine deaminase</fullName>
        <shortName evidence="1">ADE</shortName>
        <ecNumber evidence="1">3.5.4.2</ecNumber>
    </recommendedName>
    <alternativeName>
        <fullName evidence="1">Adenine aminohydrolase</fullName>
        <shortName evidence="1">AAH</shortName>
    </alternativeName>
</protein>
<name>ADE_PSEE4</name>
<proteinExistence type="inferred from homology"/>
<sequence length="316" mass="36081">MYEWLNALPKAELHMHLEGSLEPELLFALAERNKIALPWADVETLRGAYAFNNLQEFLDLYYQGADVLRTEQDFYDLTWAYLQRCKAQNVIHTEPFFDPQTHTDRGIPFEVVLGGITQALKDGREQLGIGSGLILSFLRHLSEDEAQKTLDQALPFRDAFVAVGLDSSEKGHPPSKFQRVFDRARSEGFLTVAHAGEEGPPEYIWEAIDLLKIQRIDHGVRAIEDERLMQRIIDEQIPLTVCPLSNTKLCVFEHMSQHNILDMLERGVKVTVNSDDPAYFGGYVTENFHALYEHLGMTQDQARRLAQNSLDARLVR</sequence>
<gene>
    <name type="ordered locus">PSEEN0674</name>
</gene>
<feature type="chain" id="PRO_1000017679" description="Adenine deaminase">
    <location>
        <begin position="1"/>
        <end position="316"/>
    </location>
</feature>
<feature type="active site" description="Proton donor" evidence="1">
    <location>
        <position position="197"/>
    </location>
</feature>
<feature type="binding site" evidence="1">
    <location>
        <position position="14"/>
    </location>
    <ligand>
        <name>Zn(2+)</name>
        <dbReference type="ChEBI" id="CHEBI:29105"/>
        <note>catalytic</note>
    </ligand>
</feature>
<feature type="binding site" evidence="1">
    <location>
        <position position="16"/>
    </location>
    <ligand>
        <name>Zn(2+)</name>
        <dbReference type="ChEBI" id="CHEBI:29105"/>
        <note>catalytic</note>
    </ligand>
</feature>
<feature type="binding site" evidence="1">
    <location>
        <position position="194"/>
    </location>
    <ligand>
        <name>Zn(2+)</name>
        <dbReference type="ChEBI" id="CHEBI:29105"/>
        <note>catalytic</note>
    </ligand>
</feature>
<feature type="binding site" evidence="1">
    <location>
        <position position="275"/>
    </location>
    <ligand>
        <name>Zn(2+)</name>
        <dbReference type="ChEBI" id="CHEBI:29105"/>
        <note>catalytic</note>
    </ligand>
</feature>
<feature type="binding site" evidence="1">
    <location>
        <position position="276"/>
    </location>
    <ligand>
        <name>substrate</name>
    </ligand>
</feature>
<feature type="site" description="Important for catalytic activity" evidence="1">
    <location>
        <position position="218"/>
    </location>
</feature>
<evidence type="ECO:0000255" key="1">
    <source>
        <dbReference type="HAMAP-Rule" id="MF_01962"/>
    </source>
</evidence>